<protein>
    <recommendedName>
        <fullName>Exonuclease V, mitochondrial</fullName>
        <shortName>Exo V</shortName>
        <ecNumber>3.1.-.-</ecNumber>
    </recommendedName>
    <alternativeName>
        <fullName>Defects in morphology protein 1</fullName>
    </alternativeName>
</protein>
<keyword id="KW-0004">4Fe-4S</keyword>
<keyword id="KW-0238">DNA-binding</keyword>
<keyword id="KW-0269">Exonuclease</keyword>
<keyword id="KW-0378">Hydrolase</keyword>
<keyword id="KW-0408">Iron</keyword>
<keyword id="KW-0411">Iron-sulfur</keyword>
<keyword id="KW-0460">Magnesium</keyword>
<keyword id="KW-0479">Metal-binding</keyword>
<keyword id="KW-0496">Mitochondrion</keyword>
<keyword id="KW-0540">Nuclease</keyword>
<keyword id="KW-1185">Reference proteome</keyword>
<keyword id="KW-0809">Transit peptide</keyword>
<evidence type="ECO:0000250" key="1"/>
<evidence type="ECO:0000255" key="2"/>
<evidence type="ECO:0000305" key="3"/>
<feature type="transit peptide" description="Mitochondrion" evidence="2">
    <location>
        <begin position="1"/>
        <end position="26"/>
    </location>
</feature>
<feature type="chain" id="PRO_0000406689" description="Exonuclease V, mitochondrial">
    <location>
        <begin position="27"/>
        <end position="543"/>
    </location>
</feature>
<feature type="binding site" evidence="1">
    <location>
        <position position="131"/>
    </location>
    <ligand>
        <name>[4Fe-4S] cluster</name>
        <dbReference type="ChEBI" id="CHEBI:49883"/>
    </ligand>
</feature>
<feature type="binding site" evidence="1">
    <location>
        <position position="524"/>
    </location>
    <ligand>
        <name>[4Fe-4S] cluster</name>
        <dbReference type="ChEBI" id="CHEBI:49883"/>
    </ligand>
</feature>
<feature type="binding site" evidence="1">
    <location>
        <position position="527"/>
    </location>
    <ligand>
        <name>[4Fe-4S] cluster</name>
        <dbReference type="ChEBI" id="CHEBI:49883"/>
    </ligand>
</feature>
<feature type="binding site" evidence="1">
    <location>
        <position position="533"/>
    </location>
    <ligand>
        <name>[4Fe-4S] cluster</name>
        <dbReference type="ChEBI" id="CHEBI:49883"/>
    </ligand>
</feature>
<gene>
    <name type="primary">EXO5</name>
    <name type="synonym">DEM1</name>
    <name type="ordered locus">PAS_chr4_0382</name>
</gene>
<comment type="function">
    <text evidence="1">Single strand DNA specific 5'exonuclease involved in mitochondrial DNA replication and recombination. Releases dinucleotides as main products of catalysis. Has the capacity to slide across 5'double-stranded DNA or 5'RNA sequences and resumes cutting two nucleotides downstream of the double-stranded-to-single-stranded junction or RNA-to-DNA junction, respectively (By similarity).</text>
</comment>
<comment type="cofactor">
    <cofactor evidence="1">
        <name>Mg(2+)</name>
        <dbReference type="ChEBI" id="CHEBI:18420"/>
    </cofactor>
</comment>
<comment type="cofactor">
    <cofactor evidence="1">
        <name>[4Fe-4S] cluster</name>
        <dbReference type="ChEBI" id="CHEBI:49883"/>
    </cofactor>
    <text evidence="1">Binds 1 [4Fe-4S] cluster.</text>
</comment>
<comment type="subunit">
    <text evidence="1">Monomer.</text>
</comment>
<comment type="subcellular location">
    <subcellularLocation>
        <location evidence="1">Mitochondrion</location>
    </subcellularLocation>
</comment>
<comment type="similarity">
    <text evidence="3">Belongs to the EXO5 family.</text>
</comment>
<name>EXO5_KOMPG</name>
<sequence length="543" mass="61980">MLEKGTQSLVNRTIKLRVLGGLTKKLAAPQNESLPELKPQLDVYQKFLENLRAFPTKNKSVPNSPIRYSYYKIANKESEAVNRNLLELFASKKYLPFLASEIPKLPPPYVAAAAPMNPKISVTQLLTDSWCELRSYYDSYACSRAAPSAAMVSGTEQHKSLEDRTHKPEINVTKEIQKNFTPIMMDQLKNFERTLNLISRFIDLLTIGKAREFAVTAIINKETKELIDVNNLQKLAFVHQKSPCYNDQFILASGYLDYLRSESYVNGLEKEKWIQNNYSLNTLLETSIKGPLTVIDVKTRGKPIVTKSKGVLIGHRYQIGLYRKFLGLMSGENVSGINSPISVDQINETAYTLLVTDSVQRGYDVDEPVDPVVGLVMLANNPWIITMLEQICVNDLLGNSLYDTFHAQQSTDYSWDLSQVNPKDFYQVLEPSLLQRTEQLFTKWKRPLSLRSITALISKFYPLISKKLSQNTKIMYYTDGECFHTSNYLYNPKAINTFMEDKVKFLIGQRPPRPIEKSEIPQKCGFCRFQSICEYSNLYNPVT</sequence>
<organism>
    <name type="scientific">Komagataella phaffii (strain GS115 / ATCC 20864)</name>
    <name type="common">Yeast</name>
    <name type="synonym">Pichia pastoris</name>
    <dbReference type="NCBI Taxonomy" id="644223"/>
    <lineage>
        <taxon>Eukaryota</taxon>
        <taxon>Fungi</taxon>
        <taxon>Dikarya</taxon>
        <taxon>Ascomycota</taxon>
        <taxon>Saccharomycotina</taxon>
        <taxon>Pichiomycetes</taxon>
        <taxon>Pichiales</taxon>
        <taxon>Pichiaceae</taxon>
        <taxon>Komagataella</taxon>
    </lineage>
</organism>
<dbReference type="EC" id="3.1.-.-"/>
<dbReference type="EMBL" id="FN392322">
    <property type="protein sequence ID" value="CAY71630.1"/>
    <property type="molecule type" value="Genomic_DNA"/>
</dbReference>
<dbReference type="RefSeq" id="XP_002493809.1">
    <property type="nucleotide sequence ID" value="XM_002493764.1"/>
</dbReference>
<dbReference type="FunCoup" id="C4R7Q5">
    <property type="interactions" value="15"/>
</dbReference>
<dbReference type="EnsemblFungi" id="CAY71630">
    <property type="protein sequence ID" value="CAY71630"/>
    <property type="gene ID" value="PAS_chr4_0382"/>
</dbReference>
<dbReference type="GeneID" id="8200666"/>
<dbReference type="KEGG" id="ppa:PAS_chr4_0382"/>
<dbReference type="eggNOG" id="ENOG502QR0P">
    <property type="taxonomic scope" value="Eukaryota"/>
</dbReference>
<dbReference type="HOGENOM" id="CLU_019985_0_0_1"/>
<dbReference type="InParanoid" id="C4R7Q5"/>
<dbReference type="OMA" id="LQVMYYR"/>
<dbReference type="OrthoDB" id="354769at2759"/>
<dbReference type="Proteomes" id="UP000000314">
    <property type="component" value="Chromosome 4"/>
</dbReference>
<dbReference type="GO" id="GO:0005739">
    <property type="term" value="C:mitochondrion"/>
    <property type="evidence" value="ECO:0007669"/>
    <property type="project" value="UniProtKB-SubCell"/>
</dbReference>
<dbReference type="GO" id="GO:0005634">
    <property type="term" value="C:nucleus"/>
    <property type="evidence" value="ECO:0007669"/>
    <property type="project" value="TreeGrafter"/>
</dbReference>
<dbReference type="GO" id="GO:0051539">
    <property type="term" value="F:4 iron, 4 sulfur cluster binding"/>
    <property type="evidence" value="ECO:0007669"/>
    <property type="project" value="UniProtKB-KW"/>
</dbReference>
<dbReference type="GO" id="GO:0003677">
    <property type="term" value="F:DNA binding"/>
    <property type="evidence" value="ECO:0007669"/>
    <property type="project" value="UniProtKB-KW"/>
</dbReference>
<dbReference type="GO" id="GO:0046872">
    <property type="term" value="F:metal ion binding"/>
    <property type="evidence" value="ECO:0007669"/>
    <property type="project" value="UniProtKB-KW"/>
</dbReference>
<dbReference type="GO" id="GO:0045145">
    <property type="term" value="F:single-stranded DNA 5'-3' DNA exonuclease activity"/>
    <property type="evidence" value="ECO:0007669"/>
    <property type="project" value="InterPro"/>
</dbReference>
<dbReference type="GO" id="GO:0036297">
    <property type="term" value="P:interstrand cross-link repair"/>
    <property type="evidence" value="ECO:0007669"/>
    <property type="project" value="TreeGrafter"/>
</dbReference>
<dbReference type="InterPro" id="IPR019190">
    <property type="entry name" value="EXOV"/>
</dbReference>
<dbReference type="PANTHER" id="PTHR14464">
    <property type="entry name" value="EXONUCLEASE V"/>
    <property type="match status" value="1"/>
</dbReference>
<dbReference type="PANTHER" id="PTHR14464:SF4">
    <property type="entry name" value="EXONUCLEASE V"/>
    <property type="match status" value="1"/>
</dbReference>
<dbReference type="Pfam" id="PF09810">
    <property type="entry name" value="Exo5"/>
    <property type="match status" value="1"/>
</dbReference>
<proteinExistence type="inferred from homology"/>
<accession>C4R7Q5</accession>
<reference key="1">
    <citation type="journal article" date="2009" name="Nat. Biotechnol.">
        <title>Genome sequence of the recombinant protein production host Pichia pastoris.</title>
        <authorList>
            <person name="De Schutter K."/>
            <person name="Lin Y.-C."/>
            <person name="Tiels P."/>
            <person name="Van Hecke A."/>
            <person name="Glinka S."/>
            <person name="Weber-Lehmann J."/>
            <person name="Rouze P."/>
            <person name="Van de Peer Y."/>
            <person name="Callewaert N."/>
        </authorList>
    </citation>
    <scope>NUCLEOTIDE SEQUENCE [LARGE SCALE GENOMIC DNA]</scope>
    <source>
        <strain>GS115 / ATCC 20864</strain>
    </source>
</reference>